<name>ARGJ_PSEPF</name>
<keyword id="KW-0012">Acyltransferase</keyword>
<keyword id="KW-0028">Amino-acid biosynthesis</keyword>
<keyword id="KW-0055">Arginine biosynthesis</keyword>
<keyword id="KW-0068">Autocatalytic cleavage</keyword>
<keyword id="KW-0963">Cytoplasm</keyword>
<keyword id="KW-0511">Multifunctional enzyme</keyword>
<keyword id="KW-0808">Transferase</keyword>
<dbReference type="EC" id="2.3.1.35" evidence="1"/>
<dbReference type="EC" id="2.3.1.1" evidence="1"/>
<dbReference type="EMBL" id="CP000094">
    <property type="protein sequence ID" value="ABA76164.1"/>
    <property type="molecule type" value="Genomic_DNA"/>
</dbReference>
<dbReference type="RefSeq" id="WP_011335657.1">
    <property type="nucleotide sequence ID" value="NC_007492.2"/>
</dbReference>
<dbReference type="SMR" id="Q3K7U0"/>
<dbReference type="MEROPS" id="T05.001"/>
<dbReference type="KEGG" id="pfo:Pfl01_4427"/>
<dbReference type="eggNOG" id="COG1364">
    <property type="taxonomic scope" value="Bacteria"/>
</dbReference>
<dbReference type="HOGENOM" id="CLU_027172_1_0_6"/>
<dbReference type="UniPathway" id="UPA00068">
    <property type="reaction ID" value="UER00106"/>
</dbReference>
<dbReference type="UniPathway" id="UPA00068">
    <property type="reaction ID" value="UER00111"/>
</dbReference>
<dbReference type="Proteomes" id="UP000002704">
    <property type="component" value="Chromosome"/>
</dbReference>
<dbReference type="GO" id="GO:0005737">
    <property type="term" value="C:cytoplasm"/>
    <property type="evidence" value="ECO:0007669"/>
    <property type="project" value="UniProtKB-SubCell"/>
</dbReference>
<dbReference type="GO" id="GO:0004358">
    <property type="term" value="F:glutamate N-acetyltransferase activity"/>
    <property type="evidence" value="ECO:0007669"/>
    <property type="project" value="UniProtKB-UniRule"/>
</dbReference>
<dbReference type="GO" id="GO:0004042">
    <property type="term" value="F:L-glutamate N-acetyltransferase activity"/>
    <property type="evidence" value="ECO:0007669"/>
    <property type="project" value="UniProtKB-UniRule"/>
</dbReference>
<dbReference type="GO" id="GO:0006526">
    <property type="term" value="P:L-arginine biosynthetic process"/>
    <property type="evidence" value="ECO:0007669"/>
    <property type="project" value="UniProtKB-UniRule"/>
</dbReference>
<dbReference type="GO" id="GO:0006592">
    <property type="term" value="P:ornithine biosynthetic process"/>
    <property type="evidence" value="ECO:0007669"/>
    <property type="project" value="TreeGrafter"/>
</dbReference>
<dbReference type="CDD" id="cd02152">
    <property type="entry name" value="OAT"/>
    <property type="match status" value="1"/>
</dbReference>
<dbReference type="FunFam" id="3.10.20.340:FF:000001">
    <property type="entry name" value="Arginine biosynthesis bifunctional protein ArgJ, chloroplastic"/>
    <property type="match status" value="1"/>
</dbReference>
<dbReference type="FunFam" id="3.60.70.12:FF:000001">
    <property type="entry name" value="Arginine biosynthesis bifunctional protein ArgJ, chloroplastic"/>
    <property type="match status" value="1"/>
</dbReference>
<dbReference type="Gene3D" id="3.10.20.340">
    <property type="entry name" value="ArgJ beta chain, C-terminal domain"/>
    <property type="match status" value="1"/>
</dbReference>
<dbReference type="Gene3D" id="3.60.70.12">
    <property type="entry name" value="L-amino peptidase D-ALA esterase/amidase"/>
    <property type="match status" value="1"/>
</dbReference>
<dbReference type="HAMAP" id="MF_01106">
    <property type="entry name" value="ArgJ"/>
    <property type="match status" value="1"/>
</dbReference>
<dbReference type="InterPro" id="IPR002813">
    <property type="entry name" value="Arg_biosynth_ArgJ"/>
</dbReference>
<dbReference type="InterPro" id="IPR016117">
    <property type="entry name" value="ArgJ-like_dom_sf"/>
</dbReference>
<dbReference type="InterPro" id="IPR042195">
    <property type="entry name" value="ArgJ_beta_C"/>
</dbReference>
<dbReference type="NCBIfam" id="TIGR00120">
    <property type="entry name" value="ArgJ"/>
    <property type="match status" value="1"/>
</dbReference>
<dbReference type="NCBIfam" id="NF003802">
    <property type="entry name" value="PRK05388.1"/>
    <property type="match status" value="1"/>
</dbReference>
<dbReference type="PANTHER" id="PTHR23100">
    <property type="entry name" value="ARGININE BIOSYNTHESIS BIFUNCTIONAL PROTEIN ARGJ"/>
    <property type="match status" value="1"/>
</dbReference>
<dbReference type="PANTHER" id="PTHR23100:SF0">
    <property type="entry name" value="ARGININE BIOSYNTHESIS BIFUNCTIONAL PROTEIN ARGJ, MITOCHONDRIAL"/>
    <property type="match status" value="1"/>
</dbReference>
<dbReference type="Pfam" id="PF01960">
    <property type="entry name" value="ArgJ"/>
    <property type="match status" value="1"/>
</dbReference>
<dbReference type="SUPFAM" id="SSF56266">
    <property type="entry name" value="DmpA/ArgJ-like"/>
    <property type="match status" value="1"/>
</dbReference>
<organism>
    <name type="scientific">Pseudomonas fluorescens (strain Pf0-1)</name>
    <dbReference type="NCBI Taxonomy" id="205922"/>
    <lineage>
        <taxon>Bacteria</taxon>
        <taxon>Pseudomonadati</taxon>
        <taxon>Pseudomonadota</taxon>
        <taxon>Gammaproteobacteria</taxon>
        <taxon>Pseudomonadales</taxon>
        <taxon>Pseudomonadaceae</taxon>
        <taxon>Pseudomonas</taxon>
    </lineage>
</organism>
<protein>
    <recommendedName>
        <fullName evidence="1">Arginine biosynthesis bifunctional protein ArgJ</fullName>
    </recommendedName>
    <domain>
        <recommendedName>
            <fullName evidence="1">Glutamate N-acetyltransferase</fullName>
            <ecNumber evidence="1">2.3.1.35</ecNumber>
        </recommendedName>
        <alternativeName>
            <fullName evidence="1">Ornithine acetyltransferase</fullName>
            <shortName evidence="1">OATase</shortName>
        </alternativeName>
        <alternativeName>
            <fullName evidence="1">Ornithine transacetylase</fullName>
        </alternativeName>
    </domain>
    <domain>
        <recommendedName>
            <fullName evidence="1">Amino-acid acetyltransferase</fullName>
            <ecNumber evidence="1">2.3.1.1</ecNumber>
        </recommendedName>
        <alternativeName>
            <fullName evidence="1">N-acetylglutamate synthase</fullName>
            <shortName evidence="1">AGSase</shortName>
        </alternativeName>
    </domain>
    <component>
        <recommendedName>
            <fullName evidence="1">Arginine biosynthesis bifunctional protein ArgJ alpha chain</fullName>
        </recommendedName>
    </component>
    <component>
        <recommendedName>
            <fullName evidence="1">Arginine biosynthesis bifunctional protein ArgJ beta chain</fullName>
        </recommendedName>
    </component>
</protein>
<accession>Q3K7U0</accession>
<sequence>MAVGLGPLPTLHPVAGFELGIASAGIKRPGRKDVVVMRCAEGSTVAGVFTLNAFCAAPVILAKKRVQNAVRYLLTNTGNANAGTGEPGLAAAERTTAKLAELTGVDASQILPYSTGVIGEPLPVEKIEGALQAALDDLSENNWEAAATGIMTTDTLPKGASRQFQHDGVTITVTGISKGAGMIRPNMATMLGYIATDAKVSRDVLQNLMLDGANKSFNRITIDGDTSTNDCCMLIATGKAALPEINRAEGELFAKLKQAVFEVCMDVAQAIVRDGEGATKFVTVEVNGGGNHQECLDVGYTVAHSPLIKTALFASDPNWGRILAAVGRAGVPDLDVSKIDVFLGEVCIASRGARAATYTEAQGSAVMQQEEITIRIELGRGDCSETIWTTDLSHEYVKINAEYRT</sequence>
<evidence type="ECO:0000255" key="1">
    <source>
        <dbReference type="HAMAP-Rule" id="MF_01106"/>
    </source>
</evidence>
<proteinExistence type="inferred from homology"/>
<gene>
    <name evidence="1" type="primary">argJ</name>
    <name type="ordered locus">Pfl01_4427</name>
</gene>
<comment type="function">
    <text evidence="1">Catalyzes two activities which are involved in the cyclic version of arginine biosynthesis: the synthesis of N-acetylglutamate from glutamate and acetyl-CoA as the acetyl donor, and of ornithine by transacetylation between N(2)-acetylornithine and glutamate.</text>
</comment>
<comment type="catalytic activity">
    <reaction evidence="1">
        <text>N(2)-acetyl-L-ornithine + L-glutamate = N-acetyl-L-glutamate + L-ornithine</text>
        <dbReference type="Rhea" id="RHEA:15349"/>
        <dbReference type="ChEBI" id="CHEBI:29985"/>
        <dbReference type="ChEBI" id="CHEBI:44337"/>
        <dbReference type="ChEBI" id="CHEBI:46911"/>
        <dbReference type="ChEBI" id="CHEBI:57805"/>
        <dbReference type="EC" id="2.3.1.35"/>
    </reaction>
</comment>
<comment type="catalytic activity">
    <reaction evidence="1">
        <text>L-glutamate + acetyl-CoA = N-acetyl-L-glutamate + CoA + H(+)</text>
        <dbReference type="Rhea" id="RHEA:24292"/>
        <dbReference type="ChEBI" id="CHEBI:15378"/>
        <dbReference type="ChEBI" id="CHEBI:29985"/>
        <dbReference type="ChEBI" id="CHEBI:44337"/>
        <dbReference type="ChEBI" id="CHEBI:57287"/>
        <dbReference type="ChEBI" id="CHEBI:57288"/>
        <dbReference type="EC" id="2.3.1.1"/>
    </reaction>
</comment>
<comment type="pathway">
    <text evidence="1">Amino-acid biosynthesis; L-arginine biosynthesis; L-ornithine and N-acetyl-L-glutamate from L-glutamate and N(2)-acetyl-L-ornithine (cyclic): step 1/1.</text>
</comment>
<comment type="pathway">
    <text evidence="1">Amino-acid biosynthesis; L-arginine biosynthesis; N(2)-acetyl-L-ornithine from L-glutamate: step 1/4.</text>
</comment>
<comment type="subunit">
    <text evidence="1">Heterotetramer of two alpha and two beta chains.</text>
</comment>
<comment type="subcellular location">
    <subcellularLocation>
        <location evidence="1">Cytoplasm</location>
    </subcellularLocation>
</comment>
<comment type="similarity">
    <text evidence="1">Belongs to the ArgJ family.</text>
</comment>
<reference key="1">
    <citation type="journal article" date="2009" name="Genome Biol.">
        <title>Genomic and genetic analyses of diversity and plant interactions of Pseudomonas fluorescens.</title>
        <authorList>
            <person name="Silby M.W."/>
            <person name="Cerdeno-Tarraga A.M."/>
            <person name="Vernikos G.S."/>
            <person name="Giddens S.R."/>
            <person name="Jackson R.W."/>
            <person name="Preston G.M."/>
            <person name="Zhang X.-X."/>
            <person name="Moon C.D."/>
            <person name="Gehrig S.M."/>
            <person name="Godfrey S.A.C."/>
            <person name="Knight C.G."/>
            <person name="Malone J.G."/>
            <person name="Robinson Z."/>
            <person name="Spiers A.J."/>
            <person name="Harris S."/>
            <person name="Challis G.L."/>
            <person name="Yaxley A.M."/>
            <person name="Harris D."/>
            <person name="Seeger K."/>
            <person name="Murphy L."/>
            <person name="Rutter S."/>
            <person name="Squares R."/>
            <person name="Quail M.A."/>
            <person name="Saunders E."/>
            <person name="Mavromatis K."/>
            <person name="Brettin T.S."/>
            <person name="Bentley S.D."/>
            <person name="Hothersall J."/>
            <person name="Stephens E."/>
            <person name="Thomas C.M."/>
            <person name="Parkhill J."/>
            <person name="Levy S.B."/>
            <person name="Rainey P.B."/>
            <person name="Thomson N.R."/>
        </authorList>
    </citation>
    <scope>NUCLEOTIDE SEQUENCE [LARGE SCALE GENOMIC DNA]</scope>
    <source>
        <strain>Pf0-1</strain>
    </source>
</reference>
<feature type="chain" id="PRO_0000227248" description="Arginine biosynthesis bifunctional protein ArgJ alpha chain" evidence="1">
    <location>
        <begin position="1"/>
        <end position="188"/>
    </location>
</feature>
<feature type="chain" id="PRO_0000227249" description="Arginine biosynthesis bifunctional protein ArgJ beta chain" evidence="1">
    <location>
        <begin position="189"/>
        <end position="405"/>
    </location>
</feature>
<feature type="active site" description="Nucleophile" evidence="1">
    <location>
        <position position="189"/>
    </location>
</feature>
<feature type="binding site" evidence="1">
    <location>
        <position position="152"/>
    </location>
    <ligand>
        <name>substrate</name>
    </ligand>
</feature>
<feature type="binding site" evidence="1">
    <location>
        <position position="178"/>
    </location>
    <ligand>
        <name>substrate</name>
    </ligand>
</feature>
<feature type="binding site" evidence="1">
    <location>
        <position position="189"/>
    </location>
    <ligand>
        <name>substrate</name>
    </ligand>
</feature>
<feature type="binding site" evidence="1">
    <location>
        <position position="276"/>
    </location>
    <ligand>
        <name>substrate</name>
    </ligand>
</feature>
<feature type="binding site" evidence="1">
    <location>
        <position position="400"/>
    </location>
    <ligand>
        <name>substrate</name>
    </ligand>
</feature>
<feature type="binding site" evidence="1">
    <location>
        <position position="405"/>
    </location>
    <ligand>
        <name>substrate</name>
    </ligand>
</feature>
<feature type="site" description="Involved in the stabilization of negative charge on the oxyanion by the formation of the oxyanion hole" evidence="1">
    <location>
        <position position="115"/>
    </location>
</feature>
<feature type="site" description="Involved in the stabilization of negative charge on the oxyanion by the formation of the oxyanion hole" evidence="1">
    <location>
        <position position="116"/>
    </location>
</feature>
<feature type="site" description="Cleavage; by autolysis" evidence="1">
    <location>
        <begin position="188"/>
        <end position="189"/>
    </location>
</feature>